<protein>
    <recommendedName>
        <fullName evidence="5">Transcriptional repressor FrmR</fullName>
    </recommendedName>
</protein>
<comment type="function">
    <text evidence="1 3">Formaldehyde sensor (PubMed:27934966). In the absence of formaldehyde, mediates repression of the frmRAB operon (PubMed:15466022, PubMed:27934966). Acts by binding directly to the frmRAB promoter region (PubMed:27934966). In the presence of formaldehyde, it dissociates from the frmRAB promoter region and allows expression of the formaldehyde detoxification system encoded by frmA and frmB (PubMed:27934966). It senses the toxic chemical formaldehyde directly, with no metal-dependence (PubMed:27934966).</text>
</comment>
<comment type="activity regulation">
    <text evidence="3">The presence of formaldehyde leads to the formation of methylene bridges between Pro-2 and Cys-35 residues of adjacent subunits, which remodels the surface of the tetramer (PubMed:27934966). These conformational changes lead to de-repression of frmRAB expression by promoting disassociation of FrmR from the frmRAB promoter region (PubMed:27934966). Can bind Zn(II), however Zn(II) blocks amino acid residues required for formaldehyde sensing (PubMed:27934966). It is likely that Zn(II) could only inhibit FrmR activity in vivo under conditions when Zn(II) homeostasis is severely perturbed (PubMed:27934966).</text>
</comment>
<comment type="subunit">
    <text evidence="3">Homotetramer (PubMed:27934966). Dimer of dimers (PubMed:27934966).</text>
</comment>
<comment type="subcellular location">
    <subcellularLocation>
        <location evidence="5">Cytoplasm</location>
    </subcellularLocation>
</comment>
<comment type="induction">
    <text evidence="1 2 3">Negatively autoregulated (PubMed:15466022). Induced by formaldehyde (PubMed:15466022, PubMed:27934966). Also induced by acetaldehyde, methylglyoxal and glyoxal, albeit to lesser extents (PubMed:27934966). Markedly induced (41-fold) by polyhexamethylene biguanide (PHMB), a broad-spectrum antibacterial agent, but overexpression of the gene causes no change in PHMB sensitivity (PubMed:16549663). Not induced by S-nitrosoglutathione or bulky aldehydes, such as furaldehyde and tribromoacetaldehyde (PubMed:15466022, PubMed:27934966).</text>
</comment>
<comment type="similarity">
    <text evidence="5">Belongs to the FrmR/RcnR family.</text>
</comment>
<comment type="sequence caution" evidence="5">
    <conflict type="erroneous initiation">
        <sequence resource="EMBL-CDS" id="AAB18082"/>
    </conflict>
    <text>Extended N-terminus.</text>
</comment>
<comment type="sequence caution" evidence="5">
    <conflict type="frameshift">
        <sequence resource="EMBL" id="D85613"/>
    </conflict>
</comment>
<evidence type="ECO:0000269" key="1">
    <source>
    </source>
</evidence>
<evidence type="ECO:0000269" key="2">
    <source>
    </source>
</evidence>
<evidence type="ECO:0000269" key="3">
    <source>
    </source>
</evidence>
<evidence type="ECO:0000303" key="4">
    <source>
    </source>
</evidence>
<evidence type="ECO:0000305" key="5"/>
<evidence type="ECO:0000305" key="6">
    <source>
    </source>
</evidence>
<sequence length="91" mass="10318">MPSTPEEKKKVLTRVRRIRGQIDALERSLEGDAECRAILQQIAAVRGAANGLMAEVLESHIRETFDRNDCYSREVSQSVDDTIELVRAYLK</sequence>
<feature type="initiator methionine" description="Removed" evidence="6">
    <location>
        <position position="1"/>
    </location>
</feature>
<feature type="chain" id="PRO_0000168591" description="Transcriptional repressor FrmR">
    <location>
        <begin position="2"/>
        <end position="91"/>
    </location>
</feature>
<feature type="site" description="Important for response to formaldehyde" evidence="6">
    <location>
        <position position="2"/>
    </location>
</feature>
<feature type="site" description="Important for response to formaldehyde" evidence="6">
    <location>
        <position position="35"/>
    </location>
</feature>
<feature type="mutagenesis site" description="Fails to respond to formaldehyde. The mutant exhibits enhanced sensitivity to formaldehyde." evidence="3">
    <original>P</original>
    <variation>A</variation>
    <location>
        <position position="2"/>
    </location>
</feature>
<feature type="mutagenesis site" description="Fails to respond to formaldehyde. The mutant exhibits enhanced sensitivity to formaldehyde." evidence="3">
    <original>C</original>
    <variation>A</variation>
    <location>
        <position position="35"/>
    </location>
</feature>
<feature type="mutagenesis site" description="High basal activity that is further enhanced in the presence of formaldehyde." evidence="3">
    <original>H</original>
    <variation>A</variation>
    <location>
        <position position="60"/>
    </location>
</feature>
<feature type="mutagenesis site" description="No change in activity, does not impair response to formaldehyde." evidence="3">
    <original>T</original>
    <variation>A</variation>
    <location>
        <position position="64"/>
    </location>
</feature>
<feature type="mutagenesis site" description="Does not impair response to formaldehyde." evidence="3">
    <original>C</original>
    <variation>A</variation>
    <location>
        <position position="70"/>
    </location>
</feature>
<organism>
    <name type="scientific">Escherichia coli (strain K12)</name>
    <dbReference type="NCBI Taxonomy" id="83333"/>
    <lineage>
        <taxon>Bacteria</taxon>
        <taxon>Pseudomonadati</taxon>
        <taxon>Pseudomonadota</taxon>
        <taxon>Gammaproteobacteria</taxon>
        <taxon>Enterobacterales</taxon>
        <taxon>Enterobacteriaceae</taxon>
        <taxon>Escherichia</taxon>
    </lineage>
</organism>
<name>FRMR_ECOLI</name>
<gene>
    <name evidence="4" type="primary">frmR</name>
    <name type="synonym">yaiN</name>
    <name type="ordered locus">b0357</name>
    <name type="ordered locus">JW0348</name>
</gene>
<reference key="1">
    <citation type="journal article" date="1996" name="J. Bacteriol.">
        <title>Identification of sulfate starvation-regulated genes in Escherichia coli: a gene cluster involved in the utilization of taurine as a sulfur source.</title>
        <authorList>
            <person name="van der Ploeg J.R."/>
            <person name="Weiss M.A."/>
            <person name="Saller E."/>
            <person name="Nashimoto H."/>
            <person name="Saito N."/>
            <person name="Kertesz M.A."/>
            <person name="Leisinger T."/>
        </authorList>
    </citation>
    <scope>NUCLEOTIDE SEQUENCE [GENOMIC DNA]</scope>
    <source>
        <strain>K12</strain>
    </source>
</reference>
<reference key="2">
    <citation type="submission" date="1997-01" db="EMBL/GenBank/DDBJ databases">
        <title>Sequence of minutes 4-25 of Escherichia coli.</title>
        <authorList>
            <person name="Chung E."/>
            <person name="Allen E."/>
            <person name="Araujo R."/>
            <person name="Aparicio A.M."/>
            <person name="Davis K."/>
            <person name="Duncan M."/>
            <person name="Federspiel N."/>
            <person name="Hyman R."/>
            <person name="Kalman S."/>
            <person name="Komp C."/>
            <person name="Kurdi O."/>
            <person name="Lew H."/>
            <person name="Lin D."/>
            <person name="Namath A."/>
            <person name="Oefner P."/>
            <person name="Roberts D."/>
            <person name="Schramm S."/>
            <person name="Davis R.W."/>
        </authorList>
    </citation>
    <scope>NUCLEOTIDE SEQUENCE [LARGE SCALE GENOMIC DNA]</scope>
    <source>
        <strain>K12 / MG1655 / ATCC 47076</strain>
    </source>
</reference>
<reference key="3">
    <citation type="journal article" date="1997" name="Science">
        <title>The complete genome sequence of Escherichia coli K-12.</title>
        <authorList>
            <person name="Blattner F.R."/>
            <person name="Plunkett G. III"/>
            <person name="Bloch C.A."/>
            <person name="Perna N.T."/>
            <person name="Burland V."/>
            <person name="Riley M."/>
            <person name="Collado-Vides J."/>
            <person name="Glasner J.D."/>
            <person name="Rode C.K."/>
            <person name="Mayhew G.F."/>
            <person name="Gregor J."/>
            <person name="Davis N.W."/>
            <person name="Kirkpatrick H.A."/>
            <person name="Goeden M.A."/>
            <person name="Rose D.J."/>
            <person name="Mau B."/>
            <person name="Shao Y."/>
        </authorList>
    </citation>
    <scope>NUCLEOTIDE SEQUENCE [LARGE SCALE GENOMIC DNA]</scope>
    <source>
        <strain>K12 / MG1655 / ATCC 47076</strain>
    </source>
</reference>
<reference key="4">
    <citation type="journal article" date="2006" name="Mol. Syst. Biol.">
        <title>Highly accurate genome sequences of Escherichia coli K-12 strains MG1655 and W3110.</title>
        <authorList>
            <person name="Hayashi K."/>
            <person name="Morooka N."/>
            <person name="Yamamoto Y."/>
            <person name="Fujita K."/>
            <person name="Isono K."/>
            <person name="Choi S."/>
            <person name="Ohtsubo E."/>
            <person name="Baba T."/>
            <person name="Wanner B.L."/>
            <person name="Mori H."/>
            <person name="Horiuchi T."/>
        </authorList>
    </citation>
    <scope>NUCLEOTIDE SEQUENCE [LARGE SCALE GENOMIC DNA]</scope>
    <source>
        <strain>K12 / W3110 / ATCC 27325 / DSM 5911</strain>
    </source>
</reference>
<reference key="5">
    <citation type="journal article" date="2004" name="J. Bacteriol.">
        <title>Global transcriptional effects of a suppressor tRNA and the inactivation of the regulator frmR.</title>
        <authorList>
            <person name="Herring C.D."/>
            <person name="Blattner F.R."/>
        </authorList>
    </citation>
    <scope>FUNCTION AS A REPRESSOR</scope>
    <scope>INDUCTION</scope>
    <source>
        <strain>K12 / MG1655 / ATCC 47076</strain>
    </source>
</reference>
<reference key="6">
    <citation type="journal article" date="2006" name="Microbiology">
        <title>The response of Escherichia coli to exposure to the biocide polyhexamethylene biguanide.</title>
        <authorList>
            <person name="Allen M.J."/>
            <person name="White G.F."/>
            <person name="Morby A.P."/>
        </authorList>
    </citation>
    <scope>INDUCTION BY PHMB</scope>
    <source>
        <strain>K12</strain>
    </source>
</reference>
<reference key="7">
    <citation type="journal article" date="2016" name="Sci. Rep.">
        <title>The mechanism of a formaldehyde-sensing transcriptional regulator.</title>
        <authorList>
            <person name="Denby K.J."/>
            <person name="Iwig J."/>
            <person name="Bisson C."/>
            <person name="Westwood J."/>
            <person name="Rolfe M.D."/>
            <person name="Sedelnikova S.E."/>
            <person name="Higgins K."/>
            <person name="Maroney M.J."/>
            <person name="Baker P.J."/>
            <person name="Chivers P.T."/>
            <person name="Green J."/>
        </authorList>
    </citation>
    <scope>X-RAY CRYSTALLOGRAPHY (2.70 ANGSTROMS)</scope>
    <scope>FUNCTION</scope>
    <scope>DNA-BINDING</scope>
    <scope>ACTIVITY REGULATION</scope>
    <scope>SUBUNIT</scope>
    <scope>INDUCTION</scope>
    <scope>IDENTIFICATION BY MASS SPECTROMETRY</scope>
    <scope>MUTAGENESIS OF PRO-2; CYS-35; HIS-60; THR-64 AND CYS-70</scope>
    <source>
        <strain>K12</strain>
    </source>
</reference>
<proteinExistence type="evidence at protein level"/>
<keyword id="KW-0002">3D-structure</keyword>
<keyword id="KW-0963">Cytoplasm</keyword>
<keyword id="KW-0238">DNA-binding</keyword>
<keyword id="KW-1185">Reference proteome</keyword>
<keyword id="KW-0678">Repressor</keyword>
<keyword id="KW-0804">Transcription</keyword>
<keyword id="KW-0805">Transcription regulation</keyword>
<accession>P0AAP3</accession>
<accession>P55756</accession>
<accession>P77584</accession>
<accession>Q2MC67</accession>
<dbReference type="EMBL" id="D85613">
    <property type="status" value="NOT_ANNOTATED_CDS"/>
    <property type="molecule type" value="Genomic_DNA"/>
</dbReference>
<dbReference type="EMBL" id="U73857">
    <property type="protein sequence ID" value="AAB18082.1"/>
    <property type="status" value="ALT_INIT"/>
    <property type="molecule type" value="Genomic_DNA"/>
</dbReference>
<dbReference type="EMBL" id="U00096">
    <property type="protein sequence ID" value="AAC73460.2"/>
    <property type="molecule type" value="Genomic_DNA"/>
</dbReference>
<dbReference type="EMBL" id="AP009048">
    <property type="protein sequence ID" value="BAE76139.1"/>
    <property type="molecule type" value="Genomic_DNA"/>
</dbReference>
<dbReference type="RefSeq" id="NP_414891.4">
    <property type="nucleotide sequence ID" value="NC_000913.3"/>
</dbReference>
<dbReference type="RefSeq" id="WP_001141271.1">
    <property type="nucleotide sequence ID" value="NZ_STEB01000036.1"/>
</dbReference>
<dbReference type="PDB" id="5LBM">
    <property type="method" value="X-ray"/>
    <property type="resolution" value="2.70 A"/>
    <property type="chains" value="A/B/C/D=1-91"/>
</dbReference>
<dbReference type="PDBsum" id="5LBM"/>
<dbReference type="SMR" id="P0AAP3"/>
<dbReference type="BioGRID" id="4261804">
    <property type="interactions" value="16"/>
</dbReference>
<dbReference type="DIP" id="DIP-48245N"/>
<dbReference type="FunCoup" id="P0AAP3">
    <property type="interactions" value="55"/>
</dbReference>
<dbReference type="IntAct" id="P0AAP3">
    <property type="interactions" value="2"/>
</dbReference>
<dbReference type="STRING" id="511145.b0357"/>
<dbReference type="jPOST" id="P0AAP3"/>
<dbReference type="PaxDb" id="511145-b0357"/>
<dbReference type="EnsemblBacteria" id="AAC73460">
    <property type="protein sequence ID" value="AAC73460"/>
    <property type="gene ID" value="b0357"/>
</dbReference>
<dbReference type="GeneID" id="93777098"/>
<dbReference type="GeneID" id="944986"/>
<dbReference type="KEGG" id="ecj:JW0348"/>
<dbReference type="KEGG" id="eco:b0357"/>
<dbReference type="KEGG" id="ecoc:C3026_01760"/>
<dbReference type="PATRIC" id="fig|1411691.4.peg.1921"/>
<dbReference type="EchoBASE" id="EB3081"/>
<dbReference type="eggNOG" id="COG1937">
    <property type="taxonomic scope" value="Bacteria"/>
</dbReference>
<dbReference type="HOGENOM" id="CLU_130332_3_0_6"/>
<dbReference type="InParanoid" id="P0AAP3"/>
<dbReference type="OMA" id="IAAFRTY"/>
<dbReference type="OrthoDB" id="9806052at2"/>
<dbReference type="PhylomeDB" id="P0AAP3"/>
<dbReference type="BioCyc" id="EcoCyc:G6209-MONOMER"/>
<dbReference type="PRO" id="PR:P0AAP3"/>
<dbReference type="Proteomes" id="UP000000625">
    <property type="component" value="Chromosome"/>
</dbReference>
<dbReference type="GO" id="GO:0005737">
    <property type="term" value="C:cytoplasm"/>
    <property type="evidence" value="ECO:0007669"/>
    <property type="project" value="UniProtKB-SubCell"/>
</dbReference>
<dbReference type="GO" id="GO:0032993">
    <property type="term" value="C:protein-DNA complex"/>
    <property type="evidence" value="ECO:0000318"/>
    <property type="project" value="GO_Central"/>
</dbReference>
<dbReference type="GO" id="GO:0001217">
    <property type="term" value="F:DNA-binding transcription repressor activity"/>
    <property type="evidence" value="ECO:0000318"/>
    <property type="project" value="GO_Central"/>
</dbReference>
<dbReference type="GO" id="GO:0046872">
    <property type="term" value="F:metal ion binding"/>
    <property type="evidence" value="ECO:0007669"/>
    <property type="project" value="InterPro"/>
</dbReference>
<dbReference type="GO" id="GO:0000976">
    <property type="term" value="F:transcription cis-regulatory region binding"/>
    <property type="evidence" value="ECO:0000318"/>
    <property type="project" value="GO_Central"/>
</dbReference>
<dbReference type="GO" id="GO:0045892">
    <property type="term" value="P:negative regulation of DNA-templated transcription"/>
    <property type="evidence" value="ECO:0000315"/>
    <property type="project" value="EcoCyc"/>
</dbReference>
<dbReference type="CDD" id="cd10153">
    <property type="entry name" value="RcnR-FrmR-like_DUF156"/>
    <property type="match status" value="1"/>
</dbReference>
<dbReference type="FunFam" id="1.20.58.1000:FF:000002">
    <property type="entry name" value="Transcriptional repressor FrmR"/>
    <property type="match status" value="1"/>
</dbReference>
<dbReference type="Gene3D" id="1.20.58.1000">
    <property type="entry name" value="Metal-sensitive repressor, helix protomer"/>
    <property type="match status" value="1"/>
</dbReference>
<dbReference type="InterPro" id="IPR003735">
    <property type="entry name" value="Metal_Tscrpt_repr"/>
</dbReference>
<dbReference type="InterPro" id="IPR038390">
    <property type="entry name" value="Metal_Tscrpt_repr_sf"/>
</dbReference>
<dbReference type="NCBIfam" id="NF008464">
    <property type="entry name" value="PRK11352.1"/>
    <property type="match status" value="1"/>
</dbReference>
<dbReference type="PANTHER" id="PTHR33677:SF5">
    <property type="entry name" value="TRANSCRIPTIONAL REPRESSOR FRMR"/>
    <property type="match status" value="1"/>
</dbReference>
<dbReference type="PANTHER" id="PTHR33677">
    <property type="entry name" value="TRANSCRIPTIONAL REPRESSOR FRMR-RELATED"/>
    <property type="match status" value="1"/>
</dbReference>
<dbReference type="Pfam" id="PF02583">
    <property type="entry name" value="Trns_repr_metal"/>
    <property type="match status" value="1"/>
</dbReference>